<protein>
    <recommendedName>
        <fullName>N-acetylmuramoyl-L-alanine amidase sle1</fullName>
        <ecNumber>3.5.1.28</ecNumber>
    </recommendedName>
</protein>
<feature type="signal peptide" evidence="2">
    <location>
        <begin position="1"/>
        <end position="25"/>
    </location>
</feature>
<feature type="chain" id="PRO_0000231625" description="N-acetylmuramoyl-L-alanine amidase sle1">
    <location>
        <begin position="26"/>
        <end position="334"/>
    </location>
</feature>
<feature type="domain" description="LysM 1" evidence="4">
    <location>
        <begin position="27"/>
        <end position="70"/>
    </location>
</feature>
<feature type="domain" description="LysM 2" evidence="4">
    <location>
        <begin position="91"/>
        <end position="134"/>
    </location>
</feature>
<feature type="domain" description="LysM 3" evidence="4">
    <location>
        <begin position="158"/>
        <end position="201"/>
    </location>
</feature>
<feature type="domain" description="Peptidase C51" evidence="3">
    <location>
        <begin position="210"/>
        <end position="334"/>
    </location>
</feature>
<feature type="region of interest" description="Disordered" evidence="5">
    <location>
        <begin position="71"/>
        <end position="90"/>
    </location>
</feature>
<feature type="compositionally biased region" description="Low complexity" evidence="5">
    <location>
        <begin position="71"/>
        <end position="86"/>
    </location>
</feature>
<sequence length="334" mass="35836">MQKKVIAAIIGTSAISAVAATQANAATTHTVKPGESVWAISNKYGISIAKLKSLNNLTSNLIFPNQVLKVSGSSNSTSNSSRPSTNSGGGSYYTVQAGDSLSLIASKYGTTYQNIMRLNGLNNFFIYPGQKLKVSGTASSSNAASNSSRPSTNSGGGSYYTVQAGDSLSLIASKYGTTYQKIMSLNGLNNFFIYPGQKLKVTGNASTNSGSATTTNRGYNTPVFSHQNLYTWGQCTYHVFNRRAEIGKGISTYWWNANNWDNAAAADGYTIDNRPTVGSIAQTDVGYYGHVMFVERVNNDGSILVSEMNYSAAPGILTYRTVPAYQVNNYRYIH</sequence>
<dbReference type="EC" id="3.5.1.28"/>
<dbReference type="EMBL" id="BX571857">
    <property type="protein sequence ID" value="CAG42196.1"/>
    <property type="molecule type" value="Genomic_DNA"/>
</dbReference>
<dbReference type="RefSeq" id="WP_001170264.1">
    <property type="nucleotide sequence ID" value="NC_002953.3"/>
</dbReference>
<dbReference type="SMR" id="Q6GC24"/>
<dbReference type="CAZy" id="CBM50">
    <property type="family name" value="Carbohydrate-Binding Module Family 50"/>
</dbReference>
<dbReference type="KEGG" id="sas:SAS0422"/>
<dbReference type="HOGENOM" id="CLU_016043_1_3_9"/>
<dbReference type="GO" id="GO:0009986">
    <property type="term" value="C:cell surface"/>
    <property type="evidence" value="ECO:0007669"/>
    <property type="project" value="UniProtKB-SubCell"/>
</dbReference>
<dbReference type="GO" id="GO:0005576">
    <property type="term" value="C:extracellular region"/>
    <property type="evidence" value="ECO:0007669"/>
    <property type="project" value="UniProtKB-SubCell"/>
</dbReference>
<dbReference type="GO" id="GO:0008932">
    <property type="term" value="F:lytic endotransglycosylase activity"/>
    <property type="evidence" value="ECO:0007669"/>
    <property type="project" value="TreeGrafter"/>
</dbReference>
<dbReference type="GO" id="GO:0008745">
    <property type="term" value="F:N-acetylmuramoyl-L-alanine amidase activity"/>
    <property type="evidence" value="ECO:0007669"/>
    <property type="project" value="UniProtKB-EC"/>
</dbReference>
<dbReference type="GO" id="GO:0071555">
    <property type="term" value="P:cell wall organization"/>
    <property type="evidence" value="ECO:0007669"/>
    <property type="project" value="UniProtKB-KW"/>
</dbReference>
<dbReference type="GO" id="GO:0042742">
    <property type="term" value="P:defense response to bacterium"/>
    <property type="evidence" value="ECO:0007669"/>
    <property type="project" value="UniProtKB-KW"/>
</dbReference>
<dbReference type="GO" id="GO:0000917">
    <property type="term" value="P:division septum assembly"/>
    <property type="evidence" value="ECO:0007669"/>
    <property type="project" value="UniProtKB-KW"/>
</dbReference>
<dbReference type="GO" id="GO:0031640">
    <property type="term" value="P:killing of cells of another organism"/>
    <property type="evidence" value="ECO:0007669"/>
    <property type="project" value="UniProtKB-KW"/>
</dbReference>
<dbReference type="CDD" id="cd00118">
    <property type="entry name" value="LysM"/>
    <property type="match status" value="3"/>
</dbReference>
<dbReference type="Gene3D" id="3.90.1720.10">
    <property type="entry name" value="endopeptidase domain like (from Nostoc punctiforme)"/>
    <property type="match status" value="1"/>
</dbReference>
<dbReference type="Gene3D" id="3.10.350.10">
    <property type="entry name" value="LysM domain"/>
    <property type="match status" value="3"/>
</dbReference>
<dbReference type="InterPro" id="IPR007921">
    <property type="entry name" value="CHAP_dom"/>
</dbReference>
<dbReference type="InterPro" id="IPR018392">
    <property type="entry name" value="LysM_dom"/>
</dbReference>
<dbReference type="InterPro" id="IPR036779">
    <property type="entry name" value="LysM_dom_sf"/>
</dbReference>
<dbReference type="InterPro" id="IPR038765">
    <property type="entry name" value="Papain-like_cys_pep_sf"/>
</dbReference>
<dbReference type="PANTHER" id="PTHR33734">
    <property type="entry name" value="LYSM DOMAIN-CONTAINING GPI-ANCHORED PROTEIN 2"/>
    <property type="match status" value="1"/>
</dbReference>
<dbReference type="PANTHER" id="PTHR33734:SF22">
    <property type="entry name" value="MEMBRANE-BOUND LYTIC MUREIN TRANSGLYCOSYLASE D"/>
    <property type="match status" value="1"/>
</dbReference>
<dbReference type="Pfam" id="PF05257">
    <property type="entry name" value="CHAP"/>
    <property type="match status" value="1"/>
</dbReference>
<dbReference type="Pfam" id="PF01476">
    <property type="entry name" value="LysM"/>
    <property type="match status" value="3"/>
</dbReference>
<dbReference type="SMART" id="SM00257">
    <property type="entry name" value="LysM"/>
    <property type="match status" value="3"/>
</dbReference>
<dbReference type="SUPFAM" id="SSF54001">
    <property type="entry name" value="Cysteine proteinases"/>
    <property type="match status" value="1"/>
</dbReference>
<dbReference type="SUPFAM" id="SSF54106">
    <property type="entry name" value="LysM domain"/>
    <property type="match status" value="3"/>
</dbReference>
<dbReference type="PROSITE" id="PS50911">
    <property type="entry name" value="CHAP"/>
    <property type="match status" value="1"/>
</dbReference>
<dbReference type="PROSITE" id="PS51782">
    <property type="entry name" value="LYSM"/>
    <property type="match status" value="3"/>
</dbReference>
<comment type="function">
    <text evidence="1">Peptidoglycan hydrolase involved in the splitting of the septum during cell division.</text>
</comment>
<comment type="catalytic activity">
    <reaction>
        <text>Hydrolyzes the link between N-acetylmuramoyl residues and L-amino acid residues in certain cell-wall glycopeptides.</text>
        <dbReference type="EC" id="3.5.1.28"/>
    </reaction>
</comment>
<comment type="subcellular location">
    <subcellularLocation>
        <location evidence="1">Secreted</location>
    </subcellularLocation>
    <subcellularLocation>
        <location evidence="1">Cell surface</location>
    </subcellularLocation>
</comment>
<accession>Q6GC24</accession>
<evidence type="ECO:0000250" key="1"/>
<evidence type="ECO:0000255" key="2"/>
<evidence type="ECO:0000255" key="3">
    <source>
        <dbReference type="PROSITE-ProRule" id="PRU00048"/>
    </source>
</evidence>
<evidence type="ECO:0000255" key="4">
    <source>
        <dbReference type="PROSITE-ProRule" id="PRU01118"/>
    </source>
</evidence>
<evidence type="ECO:0000256" key="5">
    <source>
        <dbReference type="SAM" id="MobiDB-lite"/>
    </source>
</evidence>
<keyword id="KW-0929">Antimicrobial</keyword>
<keyword id="KW-0081">Bacteriolytic enzyme</keyword>
<keyword id="KW-0131">Cell cycle</keyword>
<keyword id="KW-0132">Cell division</keyword>
<keyword id="KW-0961">Cell wall biogenesis/degradation</keyword>
<keyword id="KW-0378">Hydrolase</keyword>
<keyword id="KW-0677">Repeat</keyword>
<keyword id="KW-0964">Secreted</keyword>
<keyword id="KW-0717">Septation</keyword>
<keyword id="KW-0732">Signal</keyword>
<keyword id="KW-0843">Virulence</keyword>
<organism>
    <name type="scientific">Staphylococcus aureus (strain MSSA476)</name>
    <dbReference type="NCBI Taxonomy" id="282459"/>
    <lineage>
        <taxon>Bacteria</taxon>
        <taxon>Bacillati</taxon>
        <taxon>Bacillota</taxon>
        <taxon>Bacilli</taxon>
        <taxon>Bacillales</taxon>
        <taxon>Staphylococcaceae</taxon>
        <taxon>Staphylococcus</taxon>
    </lineage>
</organism>
<name>SLE1_STAAS</name>
<gene>
    <name type="primary">sle1</name>
    <name type="synonym">aaa</name>
    <name type="ordered locus">SAS0422</name>
</gene>
<proteinExistence type="inferred from homology"/>
<reference key="1">
    <citation type="journal article" date="2004" name="Proc. Natl. Acad. Sci. U.S.A.">
        <title>Complete genomes of two clinical Staphylococcus aureus strains: evidence for the rapid evolution of virulence and drug resistance.</title>
        <authorList>
            <person name="Holden M.T.G."/>
            <person name="Feil E.J."/>
            <person name="Lindsay J.A."/>
            <person name="Peacock S.J."/>
            <person name="Day N.P.J."/>
            <person name="Enright M.C."/>
            <person name="Foster T.J."/>
            <person name="Moore C.E."/>
            <person name="Hurst L."/>
            <person name="Atkin R."/>
            <person name="Barron A."/>
            <person name="Bason N."/>
            <person name="Bentley S.D."/>
            <person name="Chillingworth C."/>
            <person name="Chillingworth T."/>
            <person name="Churcher C."/>
            <person name="Clark L."/>
            <person name="Corton C."/>
            <person name="Cronin A."/>
            <person name="Doggett J."/>
            <person name="Dowd L."/>
            <person name="Feltwell T."/>
            <person name="Hance Z."/>
            <person name="Harris B."/>
            <person name="Hauser H."/>
            <person name="Holroyd S."/>
            <person name="Jagels K."/>
            <person name="James K.D."/>
            <person name="Lennard N."/>
            <person name="Line A."/>
            <person name="Mayes R."/>
            <person name="Moule S."/>
            <person name="Mungall K."/>
            <person name="Ormond D."/>
            <person name="Quail M.A."/>
            <person name="Rabbinowitsch E."/>
            <person name="Rutherford K.M."/>
            <person name="Sanders M."/>
            <person name="Sharp S."/>
            <person name="Simmonds M."/>
            <person name="Stevens K."/>
            <person name="Whitehead S."/>
            <person name="Barrell B.G."/>
            <person name="Spratt B.G."/>
            <person name="Parkhill J."/>
        </authorList>
    </citation>
    <scope>NUCLEOTIDE SEQUENCE [LARGE SCALE GENOMIC DNA]</scope>
    <source>
        <strain>MSSA476</strain>
    </source>
</reference>